<comment type="function">
    <text evidence="2">Calcitonin is a peptide hormone that causes a rapid but short-lived drop in the level of calcium and phosphate in blood by promoting the incorporation of those ions in the bones. Calcitonin function is mediated by the calcitonin receptor/CALCR and the CALCR-RAMP2 (AMYR2) receptor complex (By similarity).</text>
</comment>
<comment type="subcellular location">
    <subcellularLocation>
        <location>Secreted</location>
    </subcellularLocation>
</comment>
<comment type="similarity">
    <text evidence="6">Belongs to the calcitonin family.</text>
</comment>
<organism>
    <name type="scientific">Ovis aries</name>
    <name type="common">Sheep</name>
    <dbReference type="NCBI Taxonomy" id="9940"/>
    <lineage>
        <taxon>Eukaryota</taxon>
        <taxon>Metazoa</taxon>
        <taxon>Chordata</taxon>
        <taxon>Craniata</taxon>
        <taxon>Vertebrata</taxon>
        <taxon>Euteleostomi</taxon>
        <taxon>Mammalia</taxon>
        <taxon>Eutheria</taxon>
        <taxon>Laurasiatheria</taxon>
        <taxon>Artiodactyla</taxon>
        <taxon>Ruminantia</taxon>
        <taxon>Pecora</taxon>
        <taxon>Bovidae</taxon>
        <taxon>Caprinae</taxon>
        <taxon>Ovis</taxon>
    </lineage>
</organism>
<accession>P01261</accession>
<sequence length="143" mass="15659">MGFGKSSPFLAFSILVLCQAGSLQATPLRSALETLPDPGALSEKEGRLLLAALVKAYVQRKTNELEQEEEQEETEDSSLDSSRAKRCSNLSTCVLSAYWKDLNNYHRYSGMGFGPETPGKKRDIANSLEKDLSSHFGVPTDAN</sequence>
<reference key="1">
    <citation type="journal article" date="1993" name="Gene">
        <title>Cloning of a cDNA encoding sheep calcitonin from a thyroid C-cell library.</title>
        <authorList>
            <person name="Cumaraswamy A."/>
            <person name="Borges M."/>
            <person name="Tamir H."/>
            <person name="Nelkin B.D."/>
        </authorList>
    </citation>
    <scope>NUCLEOTIDE SEQUENCE [MRNA]</scope>
    <source>
        <tissue>Thyroid</tissue>
    </source>
</reference>
<reference key="2">
    <citation type="journal article" date="1970" name="Fed. Proc.">
        <title>Accelerated procedures for automated peptide degradation.</title>
        <authorList>
            <person name="Sauer R."/>
            <person name="Niall H.D."/>
            <person name="Potts J.T. Jr."/>
        </authorList>
    </citation>
    <scope>PROTEIN SEQUENCE OF 87-118</scope>
</reference>
<feature type="signal peptide" evidence="3">
    <location>
        <begin position="1"/>
        <end position="25"/>
    </location>
</feature>
<feature type="propeptide" id="PRO_0000004068">
    <location>
        <begin position="26"/>
        <end position="84"/>
    </location>
</feature>
<feature type="peptide" id="PRO_0000004069" description="Calcitonin">
    <location>
        <begin position="87"/>
        <end position="118"/>
    </location>
</feature>
<feature type="propeptide" id="PRO_0000004070">
    <location>
        <begin position="122"/>
        <end position="143"/>
    </location>
</feature>
<feature type="region of interest" description="Disordered" evidence="4">
    <location>
        <begin position="62"/>
        <end position="86"/>
    </location>
</feature>
<feature type="region of interest" description="Disordered" evidence="4">
    <location>
        <begin position="112"/>
        <end position="143"/>
    </location>
</feature>
<feature type="compositionally biased region" description="Acidic residues" evidence="4">
    <location>
        <begin position="65"/>
        <end position="78"/>
    </location>
</feature>
<feature type="compositionally biased region" description="Basic and acidic residues" evidence="4">
    <location>
        <begin position="118"/>
        <end position="133"/>
    </location>
</feature>
<feature type="modified residue" description="Phosphoserine" evidence="1">
    <location>
        <position position="42"/>
    </location>
</feature>
<feature type="modified residue" description="Proline amide" evidence="1">
    <location>
        <position position="118"/>
    </location>
</feature>
<feature type="disulfide bond">
    <location>
        <begin position="87"/>
        <end position="93"/>
    </location>
</feature>
<keyword id="KW-0027">Amidation</keyword>
<keyword id="KW-0165">Cleavage on pair of basic residues</keyword>
<keyword id="KW-0903">Direct protein sequencing</keyword>
<keyword id="KW-1015">Disulfide bond</keyword>
<keyword id="KW-0372">Hormone</keyword>
<keyword id="KW-0597">Phosphoprotein</keyword>
<keyword id="KW-1185">Reference proteome</keyword>
<keyword id="KW-0964">Secreted</keyword>
<keyword id="KW-0732">Signal</keyword>
<dbReference type="EMBL" id="M98053">
    <property type="status" value="NOT_ANNOTATED_CDS"/>
    <property type="molecule type" value="mRNA"/>
</dbReference>
<dbReference type="PIR" id="JN0580">
    <property type="entry name" value="TCSH"/>
</dbReference>
<dbReference type="STRING" id="9940.ENSOARP00000006540"/>
<dbReference type="PaxDb" id="9940-ENSOARP00000006540"/>
<dbReference type="eggNOG" id="ENOG502RZI5">
    <property type="taxonomic scope" value="Eukaryota"/>
</dbReference>
<dbReference type="Proteomes" id="UP000002356">
    <property type="component" value="Unplaced"/>
</dbReference>
<dbReference type="GO" id="GO:0005615">
    <property type="term" value="C:extracellular space"/>
    <property type="evidence" value="ECO:0007669"/>
    <property type="project" value="TreeGrafter"/>
</dbReference>
<dbReference type="GO" id="GO:0031716">
    <property type="term" value="F:calcitonin receptor binding"/>
    <property type="evidence" value="ECO:0007669"/>
    <property type="project" value="TreeGrafter"/>
</dbReference>
<dbReference type="GO" id="GO:0005179">
    <property type="term" value="F:hormone activity"/>
    <property type="evidence" value="ECO:0007669"/>
    <property type="project" value="UniProtKB-KW"/>
</dbReference>
<dbReference type="GO" id="GO:0007189">
    <property type="term" value="P:adenylate cyclase-activating G protein-coupled receptor signaling pathway"/>
    <property type="evidence" value="ECO:0007669"/>
    <property type="project" value="TreeGrafter"/>
</dbReference>
<dbReference type="GO" id="GO:0051480">
    <property type="term" value="P:regulation of cytosolic calcium ion concentration"/>
    <property type="evidence" value="ECO:0007669"/>
    <property type="project" value="TreeGrafter"/>
</dbReference>
<dbReference type="InterPro" id="IPR021118">
    <property type="entry name" value="Calcitonin"/>
</dbReference>
<dbReference type="InterPro" id="IPR021117">
    <property type="entry name" value="Calcitonin-like"/>
</dbReference>
<dbReference type="InterPro" id="IPR021116">
    <property type="entry name" value="Calcitonin/adrenomedullin"/>
</dbReference>
<dbReference type="InterPro" id="IPR018360">
    <property type="entry name" value="Calcitonin_CS"/>
</dbReference>
<dbReference type="InterPro" id="IPR001693">
    <property type="entry name" value="Calcitonin_peptide-like"/>
</dbReference>
<dbReference type="PANTHER" id="PTHR10505:SF16">
    <property type="entry name" value="CALCITONIN"/>
    <property type="match status" value="1"/>
</dbReference>
<dbReference type="PANTHER" id="PTHR10505">
    <property type="entry name" value="CALCITONIN-RELATED"/>
    <property type="match status" value="1"/>
</dbReference>
<dbReference type="Pfam" id="PF00214">
    <property type="entry name" value="Calc_CGRP_IAPP"/>
    <property type="match status" value="1"/>
</dbReference>
<dbReference type="PRINTS" id="PR00270">
    <property type="entry name" value="CALCITONINA"/>
</dbReference>
<dbReference type="SMART" id="SM00113">
    <property type="entry name" value="CALCITONIN"/>
    <property type="match status" value="1"/>
</dbReference>
<dbReference type="PROSITE" id="PS00258">
    <property type="entry name" value="CALCITONIN"/>
    <property type="match status" value="1"/>
</dbReference>
<name>CALC_SHEEP</name>
<evidence type="ECO:0000250" key="1">
    <source>
        <dbReference type="UniProtKB" id="P01257"/>
    </source>
</evidence>
<evidence type="ECO:0000250" key="2">
    <source>
        <dbReference type="UniProtKB" id="P01258"/>
    </source>
</evidence>
<evidence type="ECO:0000255" key="3"/>
<evidence type="ECO:0000256" key="4">
    <source>
        <dbReference type="SAM" id="MobiDB-lite"/>
    </source>
</evidence>
<evidence type="ECO:0000303" key="5">
    <source>
    </source>
</evidence>
<evidence type="ECO:0000305" key="6"/>
<proteinExistence type="evidence at protein level"/>
<gene>
    <name type="primary">CALCA</name>
    <name type="synonym">CALC</name>
</gene>
<protein>
    <recommendedName>
        <fullName evidence="5">Calcitonin</fullName>
    </recommendedName>
</protein>